<accession>B1HRX4</accession>
<sequence length="633" mass="69709">MDLNKITSPSFLKNLNKKELEQVAQEIRTFLIEKCSVTGGHIGPNLGVVELTMMLHKMFDSPKDKFLWDVGHQAYVHKILTGRASQFDTLRQFKGLCGFPKRVESEHDEWETGHSSTSLSAAMGMAAARDIKKEHNYVIPIIGDGALTGGMALEALNHIGHAKTNMIVILNDNEMSIAPNVGALHSVLGRLRTAKEYSKAKEELESLINKIPVLGGKLASTAERLKDSLKYLVVSGVFFEELGFKYLGPIDGHDFEALEMTLSHAKKVKGPVLVHVITKKGKGYKPAEDDTIGNWHGTGPYKIENGAFVKSETKGPAWSSLIAETVRKIAHEDERIVTITPAMPVGSKLQGIQQDFPNRFFDVGIAEQHAATMAAGLATQNMKPFLAIYSTFLQRAYDQVLHDIARPNLNVFIGIDRAGLVGADGETHQGVFDIAFLRHIPNMTIMMPKDENEGQHMVKTAIEYDGGPIALRYPRGNGIGVPLDDELVALPIGSWEVLREGKDASILTFGTTIPMAMQAADMLAQQGIDIEVVNARFIKPMDKDMLHRILSNHKPILTIEEAVLKGGFGSGVLEFAHDHGYLNAIVDRMGIPDQYIEHGNVDQLLEEIHMTAEDAVARMQVLLQQKQQVGLNK</sequence>
<feature type="chain" id="PRO_1000115750" description="1-deoxy-D-xylulose-5-phosphate synthase">
    <location>
        <begin position="1"/>
        <end position="633"/>
    </location>
</feature>
<feature type="binding site" evidence="1">
    <location>
        <position position="72"/>
    </location>
    <ligand>
        <name>thiamine diphosphate</name>
        <dbReference type="ChEBI" id="CHEBI:58937"/>
    </ligand>
</feature>
<feature type="binding site" evidence="1">
    <location>
        <begin position="113"/>
        <end position="115"/>
    </location>
    <ligand>
        <name>thiamine diphosphate</name>
        <dbReference type="ChEBI" id="CHEBI:58937"/>
    </ligand>
</feature>
<feature type="binding site" evidence="1">
    <location>
        <position position="144"/>
    </location>
    <ligand>
        <name>Mg(2+)</name>
        <dbReference type="ChEBI" id="CHEBI:18420"/>
    </ligand>
</feature>
<feature type="binding site" evidence="1">
    <location>
        <begin position="145"/>
        <end position="146"/>
    </location>
    <ligand>
        <name>thiamine diphosphate</name>
        <dbReference type="ChEBI" id="CHEBI:58937"/>
    </ligand>
</feature>
<feature type="binding site" evidence="1">
    <location>
        <position position="173"/>
    </location>
    <ligand>
        <name>Mg(2+)</name>
        <dbReference type="ChEBI" id="CHEBI:18420"/>
    </ligand>
</feature>
<feature type="binding site" evidence="1">
    <location>
        <position position="173"/>
    </location>
    <ligand>
        <name>thiamine diphosphate</name>
        <dbReference type="ChEBI" id="CHEBI:58937"/>
    </ligand>
</feature>
<feature type="binding site" evidence="1">
    <location>
        <position position="284"/>
    </location>
    <ligand>
        <name>thiamine diphosphate</name>
        <dbReference type="ChEBI" id="CHEBI:58937"/>
    </ligand>
</feature>
<feature type="binding site" evidence="1">
    <location>
        <position position="367"/>
    </location>
    <ligand>
        <name>thiamine diphosphate</name>
        <dbReference type="ChEBI" id="CHEBI:58937"/>
    </ligand>
</feature>
<proteinExistence type="inferred from homology"/>
<organism>
    <name type="scientific">Lysinibacillus sphaericus (strain C3-41)</name>
    <dbReference type="NCBI Taxonomy" id="444177"/>
    <lineage>
        <taxon>Bacteria</taxon>
        <taxon>Bacillati</taxon>
        <taxon>Bacillota</taxon>
        <taxon>Bacilli</taxon>
        <taxon>Bacillales</taxon>
        <taxon>Bacillaceae</taxon>
        <taxon>Lysinibacillus</taxon>
    </lineage>
</organism>
<gene>
    <name evidence="1" type="primary">dxs</name>
    <name type="ordered locus">Bsph_3509</name>
</gene>
<dbReference type="EC" id="2.2.1.7" evidence="1"/>
<dbReference type="EMBL" id="CP000817">
    <property type="protein sequence ID" value="ACA40997.1"/>
    <property type="molecule type" value="Genomic_DNA"/>
</dbReference>
<dbReference type="RefSeq" id="WP_012295057.1">
    <property type="nucleotide sequence ID" value="NC_010382.1"/>
</dbReference>
<dbReference type="SMR" id="B1HRX4"/>
<dbReference type="EnsemblBacteria" id="ACA40997">
    <property type="protein sequence ID" value="ACA40997"/>
    <property type="gene ID" value="Bsph_3509"/>
</dbReference>
<dbReference type="KEGG" id="lsp:Bsph_3509"/>
<dbReference type="HOGENOM" id="CLU_009227_1_4_9"/>
<dbReference type="UniPathway" id="UPA00064">
    <property type="reaction ID" value="UER00091"/>
</dbReference>
<dbReference type="Proteomes" id="UP000002164">
    <property type="component" value="Chromosome"/>
</dbReference>
<dbReference type="GO" id="GO:0005829">
    <property type="term" value="C:cytosol"/>
    <property type="evidence" value="ECO:0007669"/>
    <property type="project" value="TreeGrafter"/>
</dbReference>
<dbReference type="GO" id="GO:0008661">
    <property type="term" value="F:1-deoxy-D-xylulose-5-phosphate synthase activity"/>
    <property type="evidence" value="ECO:0007669"/>
    <property type="project" value="UniProtKB-UniRule"/>
</dbReference>
<dbReference type="GO" id="GO:0000287">
    <property type="term" value="F:magnesium ion binding"/>
    <property type="evidence" value="ECO:0007669"/>
    <property type="project" value="UniProtKB-UniRule"/>
</dbReference>
<dbReference type="GO" id="GO:0030976">
    <property type="term" value="F:thiamine pyrophosphate binding"/>
    <property type="evidence" value="ECO:0007669"/>
    <property type="project" value="UniProtKB-UniRule"/>
</dbReference>
<dbReference type="GO" id="GO:0052865">
    <property type="term" value="P:1-deoxy-D-xylulose 5-phosphate biosynthetic process"/>
    <property type="evidence" value="ECO:0007669"/>
    <property type="project" value="UniProtKB-UniPathway"/>
</dbReference>
<dbReference type="GO" id="GO:0019288">
    <property type="term" value="P:isopentenyl diphosphate biosynthetic process, methylerythritol 4-phosphate pathway"/>
    <property type="evidence" value="ECO:0007669"/>
    <property type="project" value="TreeGrafter"/>
</dbReference>
<dbReference type="GO" id="GO:0016114">
    <property type="term" value="P:terpenoid biosynthetic process"/>
    <property type="evidence" value="ECO:0007669"/>
    <property type="project" value="UniProtKB-UniRule"/>
</dbReference>
<dbReference type="GO" id="GO:0009228">
    <property type="term" value="P:thiamine biosynthetic process"/>
    <property type="evidence" value="ECO:0007669"/>
    <property type="project" value="UniProtKB-UniRule"/>
</dbReference>
<dbReference type="CDD" id="cd02007">
    <property type="entry name" value="TPP_DXS"/>
    <property type="match status" value="1"/>
</dbReference>
<dbReference type="CDD" id="cd07033">
    <property type="entry name" value="TPP_PYR_DXS_TK_like"/>
    <property type="match status" value="1"/>
</dbReference>
<dbReference type="FunFam" id="3.40.50.920:FF:000002">
    <property type="entry name" value="1-deoxy-D-xylulose-5-phosphate synthase"/>
    <property type="match status" value="1"/>
</dbReference>
<dbReference type="FunFam" id="3.40.50.970:FF:000030">
    <property type="entry name" value="1-deoxy-D-xylulose-5-phosphate synthase"/>
    <property type="match status" value="1"/>
</dbReference>
<dbReference type="Gene3D" id="3.40.50.920">
    <property type="match status" value="1"/>
</dbReference>
<dbReference type="Gene3D" id="3.40.50.970">
    <property type="match status" value="2"/>
</dbReference>
<dbReference type="HAMAP" id="MF_00315">
    <property type="entry name" value="DXP_synth"/>
    <property type="match status" value="1"/>
</dbReference>
<dbReference type="InterPro" id="IPR005477">
    <property type="entry name" value="Dxylulose-5-P_synthase"/>
</dbReference>
<dbReference type="InterPro" id="IPR029061">
    <property type="entry name" value="THDP-binding"/>
</dbReference>
<dbReference type="InterPro" id="IPR009014">
    <property type="entry name" value="Transketo_C/PFOR_II"/>
</dbReference>
<dbReference type="InterPro" id="IPR005475">
    <property type="entry name" value="Transketolase-like_Pyr-bd"/>
</dbReference>
<dbReference type="InterPro" id="IPR020826">
    <property type="entry name" value="Transketolase_BS"/>
</dbReference>
<dbReference type="InterPro" id="IPR033248">
    <property type="entry name" value="Transketolase_C"/>
</dbReference>
<dbReference type="InterPro" id="IPR049557">
    <property type="entry name" value="Transketolase_CS"/>
</dbReference>
<dbReference type="NCBIfam" id="TIGR00204">
    <property type="entry name" value="dxs"/>
    <property type="match status" value="1"/>
</dbReference>
<dbReference type="NCBIfam" id="NF003933">
    <property type="entry name" value="PRK05444.2-2"/>
    <property type="match status" value="1"/>
</dbReference>
<dbReference type="PANTHER" id="PTHR43322">
    <property type="entry name" value="1-D-DEOXYXYLULOSE 5-PHOSPHATE SYNTHASE-RELATED"/>
    <property type="match status" value="1"/>
</dbReference>
<dbReference type="PANTHER" id="PTHR43322:SF5">
    <property type="entry name" value="1-DEOXY-D-XYLULOSE-5-PHOSPHATE SYNTHASE, CHLOROPLASTIC"/>
    <property type="match status" value="1"/>
</dbReference>
<dbReference type="Pfam" id="PF13292">
    <property type="entry name" value="DXP_synthase_N"/>
    <property type="match status" value="1"/>
</dbReference>
<dbReference type="Pfam" id="PF02779">
    <property type="entry name" value="Transket_pyr"/>
    <property type="match status" value="1"/>
</dbReference>
<dbReference type="Pfam" id="PF02780">
    <property type="entry name" value="Transketolase_C"/>
    <property type="match status" value="1"/>
</dbReference>
<dbReference type="SMART" id="SM00861">
    <property type="entry name" value="Transket_pyr"/>
    <property type="match status" value="1"/>
</dbReference>
<dbReference type="SUPFAM" id="SSF52518">
    <property type="entry name" value="Thiamin diphosphate-binding fold (THDP-binding)"/>
    <property type="match status" value="2"/>
</dbReference>
<dbReference type="SUPFAM" id="SSF52922">
    <property type="entry name" value="TK C-terminal domain-like"/>
    <property type="match status" value="1"/>
</dbReference>
<dbReference type="PROSITE" id="PS00801">
    <property type="entry name" value="TRANSKETOLASE_1"/>
    <property type="match status" value="1"/>
</dbReference>
<dbReference type="PROSITE" id="PS00802">
    <property type="entry name" value="TRANSKETOLASE_2"/>
    <property type="match status" value="1"/>
</dbReference>
<reference key="1">
    <citation type="journal article" date="2008" name="J. Bacteriol.">
        <title>Complete genome sequence of the mosquitocidal bacterium Bacillus sphaericus C3-41 and comparison with those of closely related Bacillus species.</title>
        <authorList>
            <person name="Hu X."/>
            <person name="Fan W."/>
            <person name="Han B."/>
            <person name="Liu H."/>
            <person name="Zheng D."/>
            <person name="Li Q."/>
            <person name="Dong W."/>
            <person name="Yan J."/>
            <person name="Gao M."/>
            <person name="Berry C."/>
            <person name="Yuan Z."/>
        </authorList>
    </citation>
    <scope>NUCLEOTIDE SEQUENCE [LARGE SCALE GENOMIC DNA]</scope>
    <source>
        <strain>C3-41</strain>
    </source>
</reference>
<evidence type="ECO:0000255" key="1">
    <source>
        <dbReference type="HAMAP-Rule" id="MF_00315"/>
    </source>
</evidence>
<comment type="function">
    <text evidence="1">Catalyzes the acyloin condensation reaction between C atoms 2 and 3 of pyruvate and glyceraldehyde 3-phosphate to yield 1-deoxy-D-xylulose-5-phosphate (DXP).</text>
</comment>
<comment type="catalytic activity">
    <reaction evidence="1">
        <text>D-glyceraldehyde 3-phosphate + pyruvate + H(+) = 1-deoxy-D-xylulose 5-phosphate + CO2</text>
        <dbReference type="Rhea" id="RHEA:12605"/>
        <dbReference type="ChEBI" id="CHEBI:15361"/>
        <dbReference type="ChEBI" id="CHEBI:15378"/>
        <dbReference type="ChEBI" id="CHEBI:16526"/>
        <dbReference type="ChEBI" id="CHEBI:57792"/>
        <dbReference type="ChEBI" id="CHEBI:59776"/>
        <dbReference type="EC" id="2.2.1.7"/>
    </reaction>
</comment>
<comment type="cofactor">
    <cofactor evidence="1">
        <name>Mg(2+)</name>
        <dbReference type="ChEBI" id="CHEBI:18420"/>
    </cofactor>
    <text evidence="1">Binds 1 Mg(2+) ion per subunit.</text>
</comment>
<comment type="cofactor">
    <cofactor evidence="1">
        <name>thiamine diphosphate</name>
        <dbReference type="ChEBI" id="CHEBI:58937"/>
    </cofactor>
    <text evidence="1">Binds 1 thiamine pyrophosphate per subunit.</text>
</comment>
<comment type="pathway">
    <text evidence="1">Metabolic intermediate biosynthesis; 1-deoxy-D-xylulose 5-phosphate biosynthesis; 1-deoxy-D-xylulose 5-phosphate from D-glyceraldehyde 3-phosphate and pyruvate: step 1/1.</text>
</comment>
<comment type="subunit">
    <text evidence="1">Homodimer.</text>
</comment>
<comment type="similarity">
    <text evidence="1">Belongs to the transketolase family. DXPS subfamily.</text>
</comment>
<protein>
    <recommendedName>
        <fullName evidence="1">1-deoxy-D-xylulose-5-phosphate synthase</fullName>
        <ecNumber evidence="1">2.2.1.7</ecNumber>
    </recommendedName>
    <alternativeName>
        <fullName evidence="1">1-deoxyxylulose-5-phosphate synthase</fullName>
        <shortName evidence="1">DXP synthase</shortName>
        <shortName evidence="1">DXPS</shortName>
    </alternativeName>
</protein>
<name>DXS_LYSSC</name>
<keyword id="KW-0414">Isoprene biosynthesis</keyword>
<keyword id="KW-0460">Magnesium</keyword>
<keyword id="KW-0479">Metal-binding</keyword>
<keyword id="KW-0784">Thiamine biosynthesis</keyword>
<keyword id="KW-0786">Thiamine pyrophosphate</keyword>
<keyword id="KW-0808">Transferase</keyword>